<evidence type="ECO:0000255" key="1">
    <source>
        <dbReference type="HAMAP-Rule" id="MF_01306"/>
    </source>
</evidence>
<evidence type="ECO:0000305" key="2"/>
<comment type="function">
    <text evidence="1">One of the primary rRNA binding proteins, it binds directly to 16S rRNA where it nucleates assembly of the body of the 30S subunit.</text>
</comment>
<comment type="function">
    <text evidence="1">With S5 and S12 plays an important role in translational accuracy.</text>
</comment>
<comment type="subunit">
    <text evidence="1">Part of the 30S ribosomal subunit. Contacts protein S5. The interaction surface between S4 and S5 is involved in control of translational fidelity.</text>
</comment>
<comment type="similarity">
    <text evidence="1">Belongs to the universal ribosomal protein uS4 family.</text>
</comment>
<gene>
    <name evidence="1" type="primary">rpsD</name>
    <name type="ordered locus">CPS_0625</name>
</gene>
<proteinExistence type="inferred from homology"/>
<feature type="chain" id="PRO_0000228888" description="Small ribosomal subunit protein uS4">
    <location>
        <begin position="1"/>
        <end position="206"/>
    </location>
</feature>
<feature type="domain" description="S4 RNA-binding" evidence="1">
    <location>
        <begin position="96"/>
        <end position="156"/>
    </location>
</feature>
<name>RS4_COLP3</name>
<reference key="1">
    <citation type="journal article" date="2005" name="Proc. Natl. Acad. Sci. U.S.A.">
        <title>The psychrophilic lifestyle as revealed by the genome sequence of Colwellia psychrerythraea 34H through genomic and proteomic analyses.</title>
        <authorList>
            <person name="Methe B.A."/>
            <person name="Nelson K.E."/>
            <person name="Deming J.W."/>
            <person name="Momen B."/>
            <person name="Melamud E."/>
            <person name="Zhang X."/>
            <person name="Moult J."/>
            <person name="Madupu R."/>
            <person name="Nelson W.C."/>
            <person name="Dodson R.J."/>
            <person name="Brinkac L.M."/>
            <person name="Daugherty S.C."/>
            <person name="Durkin A.S."/>
            <person name="DeBoy R.T."/>
            <person name="Kolonay J.F."/>
            <person name="Sullivan S.A."/>
            <person name="Zhou L."/>
            <person name="Davidsen T.M."/>
            <person name="Wu M."/>
            <person name="Huston A.L."/>
            <person name="Lewis M."/>
            <person name="Weaver B."/>
            <person name="Weidman J.F."/>
            <person name="Khouri H."/>
            <person name="Utterback T.R."/>
            <person name="Feldblyum T.V."/>
            <person name="Fraser C.M."/>
        </authorList>
    </citation>
    <scope>NUCLEOTIDE SEQUENCE [LARGE SCALE GENOMIC DNA]</scope>
    <source>
        <strain>34H / ATCC BAA-681</strain>
    </source>
</reference>
<organism>
    <name type="scientific">Colwellia psychrerythraea (strain 34H / ATCC BAA-681)</name>
    <name type="common">Vibrio psychroerythus</name>
    <dbReference type="NCBI Taxonomy" id="167879"/>
    <lineage>
        <taxon>Bacteria</taxon>
        <taxon>Pseudomonadati</taxon>
        <taxon>Pseudomonadota</taxon>
        <taxon>Gammaproteobacteria</taxon>
        <taxon>Alteromonadales</taxon>
        <taxon>Colwelliaceae</taxon>
        <taxon>Colwellia</taxon>
    </lineage>
</organism>
<accession>Q488Y9</accession>
<dbReference type="EMBL" id="CP000083">
    <property type="protein sequence ID" value="AAZ24190.1"/>
    <property type="molecule type" value="Genomic_DNA"/>
</dbReference>
<dbReference type="RefSeq" id="WP_011041475.1">
    <property type="nucleotide sequence ID" value="NC_003910.7"/>
</dbReference>
<dbReference type="SMR" id="Q488Y9"/>
<dbReference type="STRING" id="167879.CPS_0625"/>
<dbReference type="KEGG" id="cps:CPS_0625"/>
<dbReference type="eggNOG" id="COG0522">
    <property type="taxonomic scope" value="Bacteria"/>
</dbReference>
<dbReference type="HOGENOM" id="CLU_092403_0_2_6"/>
<dbReference type="Proteomes" id="UP000000547">
    <property type="component" value="Chromosome"/>
</dbReference>
<dbReference type="GO" id="GO:0015935">
    <property type="term" value="C:small ribosomal subunit"/>
    <property type="evidence" value="ECO:0007669"/>
    <property type="project" value="InterPro"/>
</dbReference>
<dbReference type="GO" id="GO:0019843">
    <property type="term" value="F:rRNA binding"/>
    <property type="evidence" value="ECO:0007669"/>
    <property type="project" value="UniProtKB-UniRule"/>
</dbReference>
<dbReference type="GO" id="GO:0003735">
    <property type="term" value="F:structural constituent of ribosome"/>
    <property type="evidence" value="ECO:0007669"/>
    <property type="project" value="InterPro"/>
</dbReference>
<dbReference type="GO" id="GO:0042274">
    <property type="term" value="P:ribosomal small subunit biogenesis"/>
    <property type="evidence" value="ECO:0007669"/>
    <property type="project" value="TreeGrafter"/>
</dbReference>
<dbReference type="GO" id="GO:0006412">
    <property type="term" value="P:translation"/>
    <property type="evidence" value="ECO:0007669"/>
    <property type="project" value="UniProtKB-UniRule"/>
</dbReference>
<dbReference type="CDD" id="cd00165">
    <property type="entry name" value="S4"/>
    <property type="match status" value="1"/>
</dbReference>
<dbReference type="FunFam" id="1.10.1050.10:FF:000001">
    <property type="entry name" value="30S ribosomal protein S4"/>
    <property type="match status" value="1"/>
</dbReference>
<dbReference type="FunFam" id="3.10.290.10:FF:000001">
    <property type="entry name" value="30S ribosomal protein S4"/>
    <property type="match status" value="1"/>
</dbReference>
<dbReference type="Gene3D" id="1.10.1050.10">
    <property type="entry name" value="Ribosomal Protein S4 Delta 41, Chain A, domain 1"/>
    <property type="match status" value="1"/>
</dbReference>
<dbReference type="Gene3D" id="3.10.290.10">
    <property type="entry name" value="RNA-binding S4 domain"/>
    <property type="match status" value="1"/>
</dbReference>
<dbReference type="HAMAP" id="MF_01306_B">
    <property type="entry name" value="Ribosomal_uS4_B"/>
    <property type="match status" value="1"/>
</dbReference>
<dbReference type="InterPro" id="IPR022801">
    <property type="entry name" value="Ribosomal_uS4"/>
</dbReference>
<dbReference type="InterPro" id="IPR005709">
    <property type="entry name" value="Ribosomal_uS4_bac-type"/>
</dbReference>
<dbReference type="InterPro" id="IPR018079">
    <property type="entry name" value="Ribosomal_uS4_CS"/>
</dbReference>
<dbReference type="InterPro" id="IPR001912">
    <property type="entry name" value="Ribosomal_uS4_N"/>
</dbReference>
<dbReference type="InterPro" id="IPR002942">
    <property type="entry name" value="S4_RNA-bd"/>
</dbReference>
<dbReference type="InterPro" id="IPR036986">
    <property type="entry name" value="S4_RNA-bd_sf"/>
</dbReference>
<dbReference type="NCBIfam" id="NF003717">
    <property type="entry name" value="PRK05327.1"/>
    <property type="match status" value="1"/>
</dbReference>
<dbReference type="NCBIfam" id="TIGR01017">
    <property type="entry name" value="rpsD_bact"/>
    <property type="match status" value="1"/>
</dbReference>
<dbReference type="PANTHER" id="PTHR11831">
    <property type="entry name" value="30S 40S RIBOSOMAL PROTEIN"/>
    <property type="match status" value="1"/>
</dbReference>
<dbReference type="PANTHER" id="PTHR11831:SF4">
    <property type="entry name" value="SMALL RIBOSOMAL SUBUNIT PROTEIN US4M"/>
    <property type="match status" value="1"/>
</dbReference>
<dbReference type="Pfam" id="PF00163">
    <property type="entry name" value="Ribosomal_S4"/>
    <property type="match status" value="1"/>
</dbReference>
<dbReference type="Pfam" id="PF01479">
    <property type="entry name" value="S4"/>
    <property type="match status" value="1"/>
</dbReference>
<dbReference type="SMART" id="SM01390">
    <property type="entry name" value="Ribosomal_S4"/>
    <property type="match status" value="1"/>
</dbReference>
<dbReference type="SMART" id="SM00363">
    <property type="entry name" value="S4"/>
    <property type="match status" value="1"/>
</dbReference>
<dbReference type="SUPFAM" id="SSF55174">
    <property type="entry name" value="Alpha-L RNA-binding motif"/>
    <property type="match status" value="1"/>
</dbReference>
<dbReference type="PROSITE" id="PS00632">
    <property type="entry name" value="RIBOSOMAL_S4"/>
    <property type="match status" value="1"/>
</dbReference>
<dbReference type="PROSITE" id="PS50889">
    <property type="entry name" value="S4"/>
    <property type="match status" value="1"/>
</dbReference>
<keyword id="KW-0687">Ribonucleoprotein</keyword>
<keyword id="KW-0689">Ribosomal protein</keyword>
<keyword id="KW-0694">RNA-binding</keyword>
<keyword id="KW-0699">rRNA-binding</keyword>
<sequence length="206" mass="23416">MARYLGPKLKLSRREGTDLFLKSGVRAIDTKCKIETIPGQHGARRGRLSDYGVQLREKQKVRRIFGVLEKQFSNYYKEAARQKGNTGENLLQLLETRLDNVVYRMGYASTRAEARQLVSHKAIVVNGVVVNIPSFTVKAEDTVSVREKSKTQARIIAALELADQREKPLWVEVDTKKLEGVFKRVPDRADLSAEINEQLIVELYSK</sequence>
<protein>
    <recommendedName>
        <fullName evidence="1">Small ribosomal subunit protein uS4</fullName>
    </recommendedName>
    <alternativeName>
        <fullName evidence="2">30S ribosomal protein S4</fullName>
    </alternativeName>
</protein>